<sequence>MVAPAPAKERIQALKELINNYDYAYYVVNNPLVPDSEYDRLIRELQALEENYPELITLDSPTQRVGAKPVKSLGEIKHEIPMLSLNNAFHEGELADFHRRVKTRLGIERVDYAAEPKLDGLAVSLLYQDGVLVQGATRGDGITGEDITHNIRTIPTVSLRLRGEKIPSLLEVRGEVYMPRQGFEQFNREQIAKGEKPFVNPRNAAAGSLRQLDPRITANRPLALFCYGVGQVEGGILPDRHSEILFQLKQWGLRILPYSEVVEELAGCEKYYQHLLDLRDKLPYEIDGVVFKVDYLDQQQILGSLARAPRWALAYKFPAQEELTQILDIEVQVGRTGALTPVARLQPVFVGGVTVSKATLHNEGEIQRKDIRIGDTVYVRRAGDVIPEIVKVIMERRLPDSRPFQMPRQCPVCGSEIVKEEGGAVARCSGGLYCPAQRKEAIKHFAGRRAMDINGLGDKLVEQLTKQGLLKDVADLYGLTKEQLAGLERMGQKSATNLINAIQQSKHTTLPRFLYALGIREVGEATAQVLAKEFGSLEALASVSEERLQQVTDIGPIVAAHIAAFFRQPHNRQIIQGLQKAGVCWPEVEDKVQIVQPLLGRTFVLTGTLESMTREQAKERLQALGGKVNGSVSPHTDYLIIGANPGSKLVKARNLGITILDETYFRNFLDDTSFP</sequence>
<reference key="1">
    <citation type="journal article" date="2006" name="Appl. Environ. Microbiol.">
        <title>Complete genome sequence of the marine, chemolithoautotrophic, ammonia-oxidizing bacterium Nitrosococcus oceani ATCC 19707.</title>
        <authorList>
            <person name="Klotz M.G."/>
            <person name="Arp D.J."/>
            <person name="Chain P.S.G."/>
            <person name="El-Sheikh A.F."/>
            <person name="Hauser L.J."/>
            <person name="Hommes N.G."/>
            <person name="Larimer F.W."/>
            <person name="Malfatti S.A."/>
            <person name="Norton J.M."/>
            <person name="Poret-Peterson A.T."/>
            <person name="Vergez L.M."/>
            <person name="Ward B.B."/>
        </authorList>
    </citation>
    <scope>NUCLEOTIDE SEQUENCE [LARGE SCALE GENOMIC DNA]</scope>
    <source>
        <strain>ATCC 19707 / BCRC 17464 / JCM 30415 / NCIMB 11848 / C-107</strain>
    </source>
</reference>
<accession>Q3JAI1</accession>
<gene>
    <name evidence="1" type="primary">ligA</name>
    <name type="ordered locus">Noc_1693</name>
</gene>
<keyword id="KW-0227">DNA damage</keyword>
<keyword id="KW-0234">DNA repair</keyword>
<keyword id="KW-0235">DNA replication</keyword>
<keyword id="KW-0436">Ligase</keyword>
<keyword id="KW-0460">Magnesium</keyword>
<keyword id="KW-0464">Manganese</keyword>
<keyword id="KW-0479">Metal-binding</keyword>
<keyword id="KW-0520">NAD</keyword>
<keyword id="KW-1185">Reference proteome</keyword>
<keyword id="KW-0862">Zinc</keyword>
<name>DNLJ_NITOC</name>
<dbReference type="EC" id="6.5.1.2" evidence="1"/>
<dbReference type="EMBL" id="CP000127">
    <property type="protein sequence ID" value="ABA58165.1"/>
    <property type="molecule type" value="Genomic_DNA"/>
</dbReference>
<dbReference type="RefSeq" id="WP_002809155.1">
    <property type="nucleotide sequence ID" value="NC_007484.1"/>
</dbReference>
<dbReference type="SMR" id="Q3JAI1"/>
<dbReference type="FunCoup" id="Q3JAI1">
    <property type="interactions" value="427"/>
</dbReference>
<dbReference type="STRING" id="323261.Noc_1693"/>
<dbReference type="KEGG" id="noc:Noc_1693"/>
<dbReference type="eggNOG" id="COG0272">
    <property type="taxonomic scope" value="Bacteria"/>
</dbReference>
<dbReference type="HOGENOM" id="CLU_007764_2_1_6"/>
<dbReference type="InParanoid" id="Q3JAI1"/>
<dbReference type="Proteomes" id="UP000006838">
    <property type="component" value="Chromosome"/>
</dbReference>
<dbReference type="GO" id="GO:0005829">
    <property type="term" value="C:cytosol"/>
    <property type="evidence" value="ECO:0007669"/>
    <property type="project" value="TreeGrafter"/>
</dbReference>
<dbReference type="GO" id="GO:0003677">
    <property type="term" value="F:DNA binding"/>
    <property type="evidence" value="ECO:0007669"/>
    <property type="project" value="InterPro"/>
</dbReference>
<dbReference type="GO" id="GO:0003911">
    <property type="term" value="F:DNA ligase (NAD+) activity"/>
    <property type="evidence" value="ECO:0007669"/>
    <property type="project" value="UniProtKB-UniRule"/>
</dbReference>
<dbReference type="GO" id="GO:0046872">
    <property type="term" value="F:metal ion binding"/>
    <property type="evidence" value="ECO:0007669"/>
    <property type="project" value="UniProtKB-KW"/>
</dbReference>
<dbReference type="GO" id="GO:0006281">
    <property type="term" value="P:DNA repair"/>
    <property type="evidence" value="ECO:0007669"/>
    <property type="project" value="UniProtKB-KW"/>
</dbReference>
<dbReference type="GO" id="GO:0006260">
    <property type="term" value="P:DNA replication"/>
    <property type="evidence" value="ECO:0007669"/>
    <property type="project" value="UniProtKB-KW"/>
</dbReference>
<dbReference type="CDD" id="cd17748">
    <property type="entry name" value="BRCT_DNA_ligase_like"/>
    <property type="match status" value="1"/>
</dbReference>
<dbReference type="CDD" id="cd00114">
    <property type="entry name" value="LIGANc"/>
    <property type="match status" value="1"/>
</dbReference>
<dbReference type="FunFam" id="1.10.150.20:FF:000006">
    <property type="entry name" value="DNA ligase"/>
    <property type="match status" value="1"/>
</dbReference>
<dbReference type="FunFam" id="1.10.150.20:FF:000007">
    <property type="entry name" value="DNA ligase"/>
    <property type="match status" value="1"/>
</dbReference>
<dbReference type="FunFam" id="1.10.287.610:FF:000002">
    <property type="entry name" value="DNA ligase"/>
    <property type="match status" value="1"/>
</dbReference>
<dbReference type="FunFam" id="2.40.50.140:FF:000012">
    <property type="entry name" value="DNA ligase"/>
    <property type="match status" value="1"/>
</dbReference>
<dbReference type="FunFam" id="3.30.470.30:FF:000001">
    <property type="entry name" value="DNA ligase"/>
    <property type="match status" value="1"/>
</dbReference>
<dbReference type="Gene3D" id="6.20.10.30">
    <property type="match status" value="1"/>
</dbReference>
<dbReference type="Gene3D" id="1.10.150.20">
    <property type="entry name" value="5' to 3' exonuclease, C-terminal subdomain"/>
    <property type="match status" value="2"/>
</dbReference>
<dbReference type="Gene3D" id="3.40.50.10190">
    <property type="entry name" value="BRCT domain"/>
    <property type="match status" value="1"/>
</dbReference>
<dbReference type="Gene3D" id="3.30.470.30">
    <property type="entry name" value="DNA ligase/mRNA capping enzyme"/>
    <property type="match status" value="1"/>
</dbReference>
<dbReference type="Gene3D" id="1.10.287.610">
    <property type="entry name" value="Helix hairpin bin"/>
    <property type="match status" value="1"/>
</dbReference>
<dbReference type="Gene3D" id="2.40.50.140">
    <property type="entry name" value="Nucleic acid-binding proteins"/>
    <property type="match status" value="1"/>
</dbReference>
<dbReference type="HAMAP" id="MF_01588">
    <property type="entry name" value="DNA_ligase_A"/>
    <property type="match status" value="1"/>
</dbReference>
<dbReference type="InterPro" id="IPR001357">
    <property type="entry name" value="BRCT_dom"/>
</dbReference>
<dbReference type="InterPro" id="IPR036420">
    <property type="entry name" value="BRCT_dom_sf"/>
</dbReference>
<dbReference type="InterPro" id="IPR041663">
    <property type="entry name" value="DisA/LigA_HHH"/>
</dbReference>
<dbReference type="InterPro" id="IPR001679">
    <property type="entry name" value="DNA_ligase"/>
</dbReference>
<dbReference type="InterPro" id="IPR018239">
    <property type="entry name" value="DNA_ligase_AS"/>
</dbReference>
<dbReference type="InterPro" id="IPR033136">
    <property type="entry name" value="DNA_ligase_CS"/>
</dbReference>
<dbReference type="InterPro" id="IPR013839">
    <property type="entry name" value="DNAligase_adenylation"/>
</dbReference>
<dbReference type="InterPro" id="IPR013840">
    <property type="entry name" value="DNAligase_N"/>
</dbReference>
<dbReference type="InterPro" id="IPR003583">
    <property type="entry name" value="Hlx-hairpin-Hlx_DNA-bd_motif"/>
</dbReference>
<dbReference type="InterPro" id="IPR012340">
    <property type="entry name" value="NA-bd_OB-fold"/>
</dbReference>
<dbReference type="InterPro" id="IPR004150">
    <property type="entry name" value="NAD_DNA_ligase_OB"/>
</dbReference>
<dbReference type="InterPro" id="IPR010994">
    <property type="entry name" value="RuvA_2-like"/>
</dbReference>
<dbReference type="InterPro" id="IPR004149">
    <property type="entry name" value="Znf_DNAligase_C4"/>
</dbReference>
<dbReference type="NCBIfam" id="TIGR00575">
    <property type="entry name" value="dnlj"/>
    <property type="match status" value="1"/>
</dbReference>
<dbReference type="NCBIfam" id="NF005932">
    <property type="entry name" value="PRK07956.1"/>
    <property type="match status" value="1"/>
</dbReference>
<dbReference type="PANTHER" id="PTHR23389">
    <property type="entry name" value="CHROMOSOME TRANSMISSION FIDELITY FACTOR 18"/>
    <property type="match status" value="1"/>
</dbReference>
<dbReference type="PANTHER" id="PTHR23389:SF9">
    <property type="entry name" value="DNA LIGASE"/>
    <property type="match status" value="1"/>
</dbReference>
<dbReference type="Pfam" id="PF00533">
    <property type="entry name" value="BRCT"/>
    <property type="match status" value="1"/>
</dbReference>
<dbReference type="Pfam" id="PF01653">
    <property type="entry name" value="DNA_ligase_aden"/>
    <property type="match status" value="1"/>
</dbReference>
<dbReference type="Pfam" id="PF03120">
    <property type="entry name" value="DNA_ligase_OB"/>
    <property type="match status" value="1"/>
</dbReference>
<dbReference type="Pfam" id="PF03119">
    <property type="entry name" value="DNA_ligase_ZBD"/>
    <property type="match status" value="1"/>
</dbReference>
<dbReference type="Pfam" id="PF12826">
    <property type="entry name" value="HHH_2"/>
    <property type="match status" value="1"/>
</dbReference>
<dbReference type="Pfam" id="PF14520">
    <property type="entry name" value="HHH_5"/>
    <property type="match status" value="1"/>
</dbReference>
<dbReference type="Pfam" id="PF22745">
    <property type="entry name" value="Nlig-Ia"/>
    <property type="match status" value="1"/>
</dbReference>
<dbReference type="PIRSF" id="PIRSF001604">
    <property type="entry name" value="LigA"/>
    <property type="match status" value="1"/>
</dbReference>
<dbReference type="SMART" id="SM00292">
    <property type="entry name" value="BRCT"/>
    <property type="match status" value="1"/>
</dbReference>
<dbReference type="SMART" id="SM00278">
    <property type="entry name" value="HhH1"/>
    <property type="match status" value="4"/>
</dbReference>
<dbReference type="SMART" id="SM00532">
    <property type="entry name" value="LIGANc"/>
    <property type="match status" value="1"/>
</dbReference>
<dbReference type="SUPFAM" id="SSF52113">
    <property type="entry name" value="BRCT domain"/>
    <property type="match status" value="1"/>
</dbReference>
<dbReference type="SUPFAM" id="SSF56091">
    <property type="entry name" value="DNA ligase/mRNA capping enzyme, catalytic domain"/>
    <property type="match status" value="1"/>
</dbReference>
<dbReference type="SUPFAM" id="SSF50249">
    <property type="entry name" value="Nucleic acid-binding proteins"/>
    <property type="match status" value="1"/>
</dbReference>
<dbReference type="SUPFAM" id="SSF47781">
    <property type="entry name" value="RuvA domain 2-like"/>
    <property type="match status" value="1"/>
</dbReference>
<dbReference type="PROSITE" id="PS50172">
    <property type="entry name" value="BRCT"/>
    <property type="match status" value="1"/>
</dbReference>
<dbReference type="PROSITE" id="PS01055">
    <property type="entry name" value="DNA_LIGASE_N1"/>
    <property type="match status" value="1"/>
</dbReference>
<dbReference type="PROSITE" id="PS01056">
    <property type="entry name" value="DNA_LIGASE_N2"/>
    <property type="match status" value="1"/>
</dbReference>
<organism>
    <name type="scientific">Nitrosococcus oceani (strain ATCC 19707 / BCRC 17464 / JCM 30415 / NCIMB 11848 / C-107)</name>
    <dbReference type="NCBI Taxonomy" id="323261"/>
    <lineage>
        <taxon>Bacteria</taxon>
        <taxon>Pseudomonadati</taxon>
        <taxon>Pseudomonadota</taxon>
        <taxon>Gammaproteobacteria</taxon>
        <taxon>Chromatiales</taxon>
        <taxon>Chromatiaceae</taxon>
        <taxon>Nitrosococcus</taxon>
    </lineage>
</organism>
<proteinExistence type="inferred from homology"/>
<protein>
    <recommendedName>
        <fullName evidence="1">DNA ligase</fullName>
        <ecNumber evidence="1">6.5.1.2</ecNumber>
    </recommendedName>
    <alternativeName>
        <fullName evidence="1">Polydeoxyribonucleotide synthase [NAD(+)]</fullName>
    </alternativeName>
</protein>
<feature type="chain" id="PRO_0000313338" description="DNA ligase">
    <location>
        <begin position="1"/>
        <end position="675"/>
    </location>
</feature>
<feature type="domain" description="BRCT" evidence="1">
    <location>
        <begin position="593"/>
        <end position="675"/>
    </location>
</feature>
<feature type="active site" description="N6-AMP-lysine intermediate" evidence="1">
    <location>
        <position position="117"/>
    </location>
</feature>
<feature type="binding site" evidence="1">
    <location>
        <begin position="35"/>
        <end position="39"/>
    </location>
    <ligand>
        <name>NAD(+)</name>
        <dbReference type="ChEBI" id="CHEBI:57540"/>
    </ligand>
</feature>
<feature type="binding site" evidence="1">
    <location>
        <begin position="84"/>
        <end position="85"/>
    </location>
    <ligand>
        <name>NAD(+)</name>
        <dbReference type="ChEBI" id="CHEBI:57540"/>
    </ligand>
</feature>
<feature type="binding site" evidence="1">
    <location>
        <position position="115"/>
    </location>
    <ligand>
        <name>NAD(+)</name>
        <dbReference type="ChEBI" id="CHEBI:57540"/>
    </ligand>
</feature>
<feature type="binding site" evidence="1">
    <location>
        <position position="138"/>
    </location>
    <ligand>
        <name>NAD(+)</name>
        <dbReference type="ChEBI" id="CHEBI:57540"/>
    </ligand>
</feature>
<feature type="binding site" evidence="1">
    <location>
        <position position="175"/>
    </location>
    <ligand>
        <name>NAD(+)</name>
        <dbReference type="ChEBI" id="CHEBI:57540"/>
    </ligand>
</feature>
<feature type="binding site" evidence="1">
    <location>
        <position position="292"/>
    </location>
    <ligand>
        <name>NAD(+)</name>
        <dbReference type="ChEBI" id="CHEBI:57540"/>
    </ligand>
</feature>
<feature type="binding site" evidence="1">
    <location>
        <position position="316"/>
    </location>
    <ligand>
        <name>NAD(+)</name>
        <dbReference type="ChEBI" id="CHEBI:57540"/>
    </ligand>
</feature>
<feature type="binding site" evidence="1">
    <location>
        <position position="410"/>
    </location>
    <ligand>
        <name>Zn(2+)</name>
        <dbReference type="ChEBI" id="CHEBI:29105"/>
    </ligand>
</feature>
<feature type="binding site" evidence="1">
    <location>
        <position position="413"/>
    </location>
    <ligand>
        <name>Zn(2+)</name>
        <dbReference type="ChEBI" id="CHEBI:29105"/>
    </ligand>
</feature>
<feature type="binding site" evidence="1">
    <location>
        <position position="428"/>
    </location>
    <ligand>
        <name>Zn(2+)</name>
        <dbReference type="ChEBI" id="CHEBI:29105"/>
    </ligand>
</feature>
<feature type="binding site" evidence="1">
    <location>
        <position position="434"/>
    </location>
    <ligand>
        <name>Zn(2+)</name>
        <dbReference type="ChEBI" id="CHEBI:29105"/>
    </ligand>
</feature>
<comment type="function">
    <text evidence="1">DNA ligase that catalyzes the formation of phosphodiester linkages between 5'-phosphoryl and 3'-hydroxyl groups in double-stranded DNA using NAD as a coenzyme and as the energy source for the reaction. It is essential for DNA replication and repair of damaged DNA.</text>
</comment>
<comment type="catalytic activity">
    <reaction evidence="1">
        <text>NAD(+) + (deoxyribonucleotide)n-3'-hydroxyl + 5'-phospho-(deoxyribonucleotide)m = (deoxyribonucleotide)n+m + AMP + beta-nicotinamide D-nucleotide.</text>
        <dbReference type="EC" id="6.5.1.2"/>
    </reaction>
</comment>
<comment type="cofactor">
    <cofactor evidence="1">
        <name>Mg(2+)</name>
        <dbReference type="ChEBI" id="CHEBI:18420"/>
    </cofactor>
    <cofactor evidence="1">
        <name>Mn(2+)</name>
        <dbReference type="ChEBI" id="CHEBI:29035"/>
    </cofactor>
</comment>
<comment type="similarity">
    <text evidence="1">Belongs to the NAD-dependent DNA ligase family. LigA subfamily.</text>
</comment>
<evidence type="ECO:0000255" key="1">
    <source>
        <dbReference type="HAMAP-Rule" id="MF_01588"/>
    </source>
</evidence>